<sequence>MNNIIKMLNDEQMKQDVPAFGAGDTVVVQVRVKEGDKERLQAFEGVVIAKRNRGLHSAFTVRKISNGEGVERAFQTHSPLIASIEVKRRGRVRRAKLYYLRDRSGKSARIREKLATK</sequence>
<evidence type="ECO:0000255" key="1">
    <source>
        <dbReference type="HAMAP-Rule" id="MF_00402"/>
    </source>
</evidence>
<evidence type="ECO:0000305" key="2"/>
<proteinExistence type="inferred from homology"/>
<feature type="chain" id="PRO_1000049746" description="Large ribosomal subunit protein bL19">
    <location>
        <begin position="1"/>
        <end position="117"/>
    </location>
</feature>
<protein>
    <recommendedName>
        <fullName evidence="1">Large ribosomal subunit protein bL19</fullName>
    </recommendedName>
    <alternativeName>
        <fullName evidence="2">50S ribosomal protein L19</fullName>
    </alternativeName>
</protein>
<dbReference type="EMBL" id="CP000444">
    <property type="protein sequence ID" value="ABI43901.1"/>
    <property type="molecule type" value="Genomic_DNA"/>
</dbReference>
<dbReference type="SMR" id="Q0HSK4"/>
<dbReference type="KEGG" id="shm:Shewmr7_2917"/>
<dbReference type="HOGENOM" id="CLU_103507_2_2_6"/>
<dbReference type="GO" id="GO:0022625">
    <property type="term" value="C:cytosolic large ribosomal subunit"/>
    <property type="evidence" value="ECO:0007669"/>
    <property type="project" value="TreeGrafter"/>
</dbReference>
<dbReference type="GO" id="GO:0003735">
    <property type="term" value="F:structural constituent of ribosome"/>
    <property type="evidence" value="ECO:0007669"/>
    <property type="project" value="InterPro"/>
</dbReference>
<dbReference type="GO" id="GO:0006412">
    <property type="term" value="P:translation"/>
    <property type="evidence" value="ECO:0007669"/>
    <property type="project" value="UniProtKB-UniRule"/>
</dbReference>
<dbReference type="FunFam" id="2.30.30.790:FF:000001">
    <property type="entry name" value="50S ribosomal protein L19"/>
    <property type="match status" value="1"/>
</dbReference>
<dbReference type="Gene3D" id="2.30.30.790">
    <property type="match status" value="1"/>
</dbReference>
<dbReference type="HAMAP" id="MF_00402">
    <property type="entry name" value="Ribosomal_bL19"/>
    <property type="match status" value="1"/>
</dbReference>
<dbReference type="InterPro" id="IPR001857">
    <property type="entry name" value="Ribosomal_bL19"/>
</dbReference>
<dbReference type="InterPro" id="IPR018257">
    <property type="entry name" value="Ribosomal_bL19_CS"/>
</dbReference>
<dbReference type="InterPro" id="IPR038657">
    <property type="entry name" value="Ribosomal_bL19_sf"/>
</dbReference>
<dbReference type="InterPro" id="IPR008991">
    <property type="entry name" value="Translation_prot_SH3-like_sf"/>
</dbReference>
<dbReference type="NCBIfam" id="TIGR01024">
    <property type="entry name" value="rplS_bact"/>
    <property type="match status" value="1"/>
</dbReference>
<dbReference type="PANTHER" id="PTHR15680:SF9">
    <property type="entry name" value="LARGE RIBOSOMAL SUBUNIT PROTEIN BL19M"/>
    <property type="match status" value="1"/>
</dbReference>
<dbReference type="PANTHER" id="PTHR15680">
    <property type="entry name" value="RIBOSOMAL PROTEIN L19"/>
    <property type="match status" value="1"/>
</dbReference>
<dbReference type="Pfam" id="PF01245">
    <property type="entry name" value="Ribosomal_L19"/>
    <property type="match status" value="1"/>
</dbReference>
<dbReference type="PIRSF" id="PIRSF002191">
    <property type="entry name" value="Ribosomal_L19"/>
    <property type="match status" value="1"/>
</dbReference>
<dbReference type="PRINTS" id="PR00061">
    <property type="entry name" value="RIBOSOMALL19"/>
</dbReference>
<dbReference type="SUPFAM" id="SSF50104">
    <property type="entry name" value="Translation proteins SH3-like domain"/>
    <property type="match status" value="1"/>
</dbReference>
<dbReference type="PROSITE" id="PS01015">
    <property type="entry name" value="RIBOSOMAL_L19"/>
    <property type="match status" value="1"/>
</dbReference>
<organism>
    <name type="scientific">Shewanella sp. (strain MR-7)</name>
    <dbReference type="NCBI Taxonomy" id="60481"/>
    <lineage>
        <taxon>Bacteria</taxon>
        <taxon>Pseudomonadati</taxon>
        <taxon>Pseudomonadota</taxon>
        <taxon>Gammaproteobacteria</taxon>
        <taxon>Alteromonadales</taxon>
        <taxon>Shewanellaceae</taxon>
        <taxon>Shewanella</taxon>
    </lineage>
</organism>
<keyword id="KW-0687">Ribonucleoprotein</keyword>
<keyword id="KW-0689">Ribosomal protein</keyword>
<name>RL19_SHESR</name>
<gene>
    <name evidence="1" type="primary">rplS</name>
    <name type="ordered locus">Shewmr7_2917</name>
</gene>
<accession>Q0HSK4</accession>
<reference key="1">
    <citation type="submission" date="2006-08" db="EMBL/GenBank/DDBJ databases">
        <title>Complete sequence of chromosome 1 of Shewanella sp. MR-7.</title>
        <authorList>
            <person name="Copeland A."/>
            <person name="Lucas S."/>
            <person name="Lapidus A."/>
            <person name="Barry K."/>
            <person name="Detter J.C."/>
            <person name="Glavina del Rio T."/>
            <person name="Hammon N."/>
            <person name="Israni S."/>
            <person name="Dalin E."/>
            <person name="Tice H."/>
            <person name="Pitluck S."/>
            <person name="Kiss H."/>
            <person name="Brettin T."/>
            <person name="Bruce D."/>
            <person name="Han C."/>
            <person name="Tapia R."/>
            <person name="Gilna P."/>
            <person name="Schmutz J."/>
            <person name="Larimer F."/>
            <person name="Land M."/>
            <person name="Hauser L."/>
            <person name="Kyrpides N."/>
            <person name="Mikhailova N."/>
            <person name="Nealson K."/>
            <person name="Konstantinidis K."/>
            <person name="Klappenbach J."/>
            <person name="Tiedje J."/>
            <person name="Richardson P."/>
        </authorList>
    </citation>
    <scope>NUCLEOTIDE SEQUENCE [LARGE SCALE GENOMIC DNA]</scope>
    <source>
        <strain>MR-7</strain>
    </source>
</reference>
<comment type="function">
    <text evidence="1">This protein is located at the 30S-50S ribosomal subunit interface and may play a role in the structure and function of the aminoacyl-tRNA binding site.</text>
</comment>
<comment type="similarity">
    <text evidence="1">Belongs to the bacterial ribosomal protein bL19 family.</text>
</comment>